<reference key="1">
    <citation type="journal article" date="2000" name="Nature">
        <title>Sequence and analysis of chromosome 5 of the plant Arabidopsis thaliana.</title>
        <authorList>
            <person name="Tabata S."/>
            <person name="Kaneko T."/>
            <person name="Nakamura Y."/>
            <person name="Kotani H."/>
            <person name="Kato T."/>
            <person name="Asamizu E."/>
            <person name="Miyajima N."/>
            <person name="Sasamoto S."/>
            <person name="Kimura T."/>
            <person name="Hosouchi T."/>
            <person name="Kawashima K."/>
            <person name="Kohara M."/>
            <person name="Matsumoto M."/>
            <person name="Matsuno A."/>
            <person name="Muraki A."/>
            <person name="Nakayama S."/>
            <person name="Nakazaki N."/>
            <person name="Naruo K."/>
            <person name="Okumura S."/>
            <person name="Shinpo S."/>
            <person name="Takeuchi C."/>
            <person name="Wada T."/>
            <person name="Watanabe A."/>
            <person name="Yamada M."/>
            <person name="Yasuda M."/>
            <person name="Sato S."/>
            <person name="de la Bastide M."/>
            <person name="Huang E."/>
            <person name="Spiegel L."/>
            <person name="Gnoj L."/>
            <person name="O'Shaughnessy A."/>
            <person name="Preston R."/>
            <person name="Habermann K."/>
            <person name="Murray J."/>
            <person name="Johnson D."/>
            <person name="Rohlfing T."/>
            <person name="Nelson J."/>
            <person name="Stoneking T."/>
            <person name="Pepin K."/>
            <person name="Spieth J."/>
            <person name="Sekhon M."/>
            <person name="Armstrong J."/>
            <person name="Becker M."/>
            <person name="Belter E."/>
            <person name="Cordum H."/>
            <person name="Cordes M."/>
            <person name="Courtney L."/>
            <person name="Courtney W."/>
            <person name="Dante M."/>
            <person name="Du H."/>
            <person name="Edwards J."/>
            <person name="Fryman J."/>
            <person name="Haakensen B."/>
            <person name="Lamar E."/>
            <person name="Latreille P."/>
            <person name="Leonard S."/>
            <person name="Meyer R."/>
            <person name="Mulvaney E."/>
            <person name="Ozersky P."/>
            <person name="Riley A."/>
            <person name="Strowmatt C."/>
            <person name="Wagner-McPherson C."/>
            <person name="Wollam A."/>
            <person name="Yoakum M."/>
            <person name="Bell M."/>
            <person name="Dedhia N."/>
            <person name="Parnell L."/>
            <person name="Shah R."/>
            <person name="Rodriguez M."/>
            <person name="Hoon See L."/>
            <person name="Vil D."/>
            <person name="Baker J."/>
            <person name="Kirchoff K."/>
            <person name="Toth K."/>
            <person name="King L."/>
            <person name="Bahret A."/>
            <person name="Miller B."/>
            <person name="Marra M.A."/>
            <person name="Martienssen R."/>
            <person name="McCombie W.R."/>
            <person name="Wilson R.K."/>
            <person name="Murphy G."/>
            <person name="Bancroft I."/>
            <person name="Volckaert G."/>
            <person name="Wambutt R."/>
            <person name="Duesterhoeft A."/>
            <person name="Stiekema W."/>
            <person name="Pohl T."/>
            <person name="Entian K.-D."/>
            <person name="Terryn N."/>
            <person name="Hartley N."/>
            <person name="Bent E."/>
            <person name="Johnson S."/>
            <person name="Langham S.-A."/>
            <person name="McCullagh B."/>
            <person name="Robben J."/>
            <person name="Grymonprez B."/>
            <person name="Zimmermann W."/>
            <person name="Ramsperger U."/>
            <person name="Wedler H."/>
            <person name="Balke K."/>
            <person name="Wedler E."/>
            <person name="Peters S."/>
            <person name="van Staveren M."/>
            <person name="Dirkse W."/>
            <person name="Mooijman P."/>
            <person name="Klein Lankhorst R."/>
            <person name="Weitzenegger T."/>
            <person name="Bothe G."/>
            <person name="Rose M."/>
            <person name="Hauf J."/>
            <person name="Berneiser S."/>
            <person name="Hempel S."/>
            <person name="Feldpausch M."/>
            <person name="Lamberth S."/>
            <person name="Villarroel R."/>
            <person name="Gielen J."/>
            <person name="Ardiles W."/>
            <person name="Bents O."/>
            <person name="Lemcke K."/>
            <person name="Kolesov G."/>
            <person name="Mayer K.F.X."/>
            <person name="Rudd S."/>
            <person name="Schoof H."/>
            <person name="Schueller C."/>
            <person name="Zaccaria P."/>
            <person name="Mewes H.-W."/>
            <person name="Bevan M."/>
            <person name="Fransz P.F."/>
        </authorList>
    </citation>
    <scope>NUCLEOTIDE SEQUENCE [LARGE SCALE GENOMIC DNA]</scope>
    <source>
        <strain>cv. Columbia</strain>
    </source>
</reference>
<reference key="2">
    <citation type="journal article" date="2017" name="Plant J.">
        <title>Araport11: a complete reannotation of the Arabidopsis thaliana reference genome.</title>
        <authorList>
            <person name="Cheng C.Y."/>
            <person name="Krishnakumar V."/>
            <person name="Chan A.P."/>
            <person name="Thibaud-Nissen F."/>
            <person name="Schobel S."/>
            <person name="Town C.D."/>
        </authorList>
    </citation>
    <scope>GENOME REANNOTATION</scope>
    <source>
        <strain>cv. Columbia</strain>
    </source>
</reference>
<reference key="3">
    <citation type="journal article" date="2004" name="Plant Cell">
        <title>Overexpression of GLUTAMINE DUMPER1 leads to hypersecretion of glutamine from hydathodes of Arabidopsis leaves.</title>
        <authorList>
            <person name="Pilot G."/>
            <person name="Stransky H."/>
            <person name="Bushey D.F."/>
            <person name="Pratelli R."/>
            <person name="Ludewig U."/>
            <person name="Wingate V.P."/>
            <person name="Frommer W.B."/>
        </authorList>
    </citation>
    <scope>GENE FAMILY</scope>
</reference>
<reference key="4">
    <citation type="journal article" date="2006" name="FEBS Lett.">
        <title>The plant-specific VIMAG domain of Glutamine Dumper1 is necessary for the function of the protein in Arabidopsis.</title>
        <authorList>
            <person name="Pratelli R."/>
            <person name="Pilot G."/>
        </authorList>
    </citation>
    <scope>GENE FAMILY</scope>
</reference>
<reference key="5">
    <citation type="journal article" date="2007" name="FEBS Lett.">
        <authorList>
            <person name="Pratelli R."/>
            <person name="Pilot G."/>
        </authorList>
    </citation>
    <scope>ERRATUM OF PUBMED:17157837</scope>
</reference>
<reference key="6">
    <citation type="book" date="2008" name="Proceedings of the 19th international conference on Arabidopsis research">
        <title>The over-expression of GDU-like genes leads to modification in amino acid content and transport.</title>
        <authorList>
            <person name="Pratelli R."/>
            <person name="Frommer W.B."/>
            <person name="Pilot G."/>
        </authorList>
    </citation>
    <scope>FUNCTION</scope>
    <scope>TISSUE SPECIFICITY</scope>
    <scope>SUBCELLULAR LOCATION</scope>
</reference>
<reference key="7">
    <citation type="journal article" date="2010" name="Plant Physiol.">
        <title>Stimulation of nonselective amino acid export by glutamine dumper proteins.</title>
        <authorList>
            <person name="Pratelli R."/>
            <person name="Voll L.M."/>
            <person name="Horst R.J."/>
            <person name="Frommer W.B."/>
            <person name="Pilot G."/>
        </authorList>
    </citation>
    <scope>FUNCTION</scope>
    <scope>TISSUE SPECIFICITY</scope>
</reference>
<name>GDU5_ARATH</name>
<proteinExistence type="evidence at transcript level"/>
<comment type="function">
    <text evidence="3 4">Probable subunit of an amino acid transporter involved in the regulation of the amino acid metabolism. Stimulates amino acid export by activating nonselective amino acid facilitators.</text>
</comment>
<comment type="subcellular location">
    <subcellularLocation>
        <location evidence="4">Membrane</location>
        <topology evidence="4">Single-pass membrane protein</topology>
    </subcellularLocation>
</comment>
<comment type="tissue specificity">
    <text evidence="3 4">Expressed in the vascular tissues. Also detected in guard cells.</text>
</comment>
<comment type="domain">
    <text evidence="1">The VIMAG motif is necessary for the function of the protein.</text>
</comment>
<comment type="miscellaneous">
    <text>Overexpression of GLUTAMINE DUMPER 5 leads to free amino acid levels accumulation and plant size decrease (PubMed:20018597, Ref.6).</text>
</comment>
<comment type="similarity">
    <text evidence="5">Belongs to the GLUTAMINE DUMPER 1 (TC 9.B.60) family.</text>
</comment>
<protein>
    <recommendedName>
        <fullName>Protein GLUTAMINE DUMPER 5</fullName>
    </recommendedName>
</protein>
<accession>Q3E965</accession>
<organism>
    <name type="scientific">Arabidopsis thaliana</name>
    <name type="common">Mouse-ear cress</name>
    <dbReference type="NCBI Taxonomy" id="3702"/>
    <lineage>
        <taxon>Eukaryota</taxon>
        <taxon>Viridiplantae</taxon>
        <taxon>Streptophyta</taxon>
        <taxon>Embryophyta</taxon>
        <taxon>Tracheophyta</taxon>
        <taxon>Spermatophyta</taxon>
        <taxon>Magnoliopsida</taxon>
        <taxon>eudicotyledons</taxon>
        <taxon>Gunneridae</taxon>
        <taxon>Pentapetalae</taxon>
        <taxon>rosids</taxon>
        <taxon>malvids</taxon>
        <taxon>Brassicales</taxon>
        <taxon>Brassicaceae</taxon>
        <taxon>Camelineae</taxon>
        <taxon>Arabidopsis</taxon>
    </lineage>
</organism>
<gene>
    <name type="primary">GDU5</name>
    <name type="ordered locus">At5g24920</name>
    <name type="ORF">F6A4.130</name>
</gene>
<evidence type="ECO:0000250" key="1"/>
<evidence type="ECO:0000255" key="2"/>
<evidence type="ECO:0000269" key="3">
    <source>
    </source>
</evidence>
<evidence type="ECO:0000269" key="4">
    <source ref="6"/>
</evidence>
<evidence type="ECO:0000305" key="5"/>
<keyword id="KW-0029">Amino-acid transport</keyword>
<keyword id="KW-0472">Membrane</keyword>
<keyword id="KW-1185">Reference proteome</keyword>
<keyword id="KW-0812">Transmembrane</keyword>
<keyword id="KW-1133">Transmembrane helix</keyword>
<keyword id="KW-0813">Transport</keyword>
<feature type="chain" id="PRO_0000419943" description="Protein GLUTAMINE DUMPER 5">
    <location>
        <begin position="1"/>
        <end position="131"/>
    </location>
</feature>
<feature type="topological domain" description="Extracellular" evidence="2">
    <location>
        <begin position="1"/>
        <end position="34"/>
    </location>
</feature>
<feature type="transmembrane region" description="Helical" evidence="2">
    <location>
        <begin position="35"/>
        <end position="55"/>
    </location>
</feature>
<feature type="topological domain" description="Cytoplasmic" evidence="2">
    <location>
        <begin position="56"/>
        <end position="131"/>
    </location>
</feature>
<feature type="short sequence motif" description="VIMAG">
    <location>
        <begin position="88"/>
        <end position="92"/>
    </location>
</feature>
<sequence>MRQFPSIRGNINEKMMTTMVESQTRSPWRTPVPYLFGGLAAMLGLIAFALLLLACSYWRLSRQTEDEEKQTESGEKVVAKAFEEKILVIMAGQNNPTFLATPVAAKICLDCVNMEKKEGQNGESKVTEENH</sequence>
<dbReference type="EMBL" id="AF069716">
    <property type="status" value="NOT_ANNOTATED_CDS"/>
    <property type="molecule type" value="Genomic_DNA"/>
</dbReference>
<dbReference type="EMBL" id="CP002688">
    <property type="protein sequence ID" value="AED93378.1"/>
    <property type="molecule type" value="Genomic_DNA"/>
</dbReference>
<dbReference type="RefSeq" id="NP_197874.2">
    <property type="nucleotide sequence ID" value="NM_122401.3"/>
</dbReference>
<dbReference type="SMR" id="Q3E965"/>
<dbReference type="BioGRID" id="17837">
    <property type="interactions" value="11"/>
</dbReference>
<dbReference type="FunCoup" id="Q3E965">
    <property type="interactions" value="1"/>
</dbReference>
<dbReference type="IntAct" id="Q3E965">
    <property type="interactions" value="11"/>
</dbReference>
<dbReference type="MINT" id="Q3E965"/>
<dbReference type="PaxDb" id="3702-AT5G24920.1"/>
<dbReference type="ProteomicsDB" id="247127"/>
<dbReference type="EnsemblPlants" id="AT5G24920.1">
    <property type="protein sequence ID" value="AT5G24920.1"/>
    <property type="gene ID" value="AT5G24920"/>
</dbReference>
<dbReference type="GeneID" id="832562"/>
<dbReference type="Gramene" id="AT5G24920.1">
    <property type="protein sequence ID" value="AT5G24920.1"/>
    <property type="gene ID" value="AT5G24920"/>
</dbReference>
<dbReference type="KEGG" id="ath:AT5G24920"/>
<dbReference type="Araport" id="AT5G24920"/>
<dbReference type="TAIR" id="AT5G24920">
    <property type="gene designation" value="GDU5"/>
</dbReference>
<dbReference type="eggNOG" id="ENOG502S4AK">
    <property type="taxonomic scope" value="Eukaryota"/>
</dbReference>
<dbReference type="HOGENOM" id="CLU_112624_2_3_1"/>
<dbReference type="InParanoid" id="Q3E965"/>
<dbReference type="OMA" id="KICLDCV"/>
<dbReference type="PhylomeDB" id="Q3E965"/>
<dbReference type="PRO" id="PR:Q3E965"/>
<dbReference type="Proteomes" id="UP000006548">
    <property type="component" value="Chromosome 5"/>
</dbReference>
<dbReference type="ExpressionAtlas" id="Q3E965">
    <property type="expression patterns" value="baseline and differential"/>
</dbReference>
<dbReference type="GO" id="GO:0016020">
    <property type="term" value="C:membrane"/>
    <property type="evidence" value="ECO:0007669"/>
    <property type="project" value="UniProtKB-SubCell"/>
</dbReference>
<dbReference type="GO" id="GO:0006865">
    <property type="term" value="P:amino acid transport"/>
    <property type="evidence" value="ECO:0007669"/>
    <property type="project" value="UniProtKB-KW"/>
</dbReference>
<dbReference type="GO" id="GO:0080143">
    <property type="term" value="P:regulation of amino acid export"/>
    <property type="evidence" value="ECO:0000315"/>
    <property type="project" value="TAIR"/>
</dbReference>
<dbReference type="InterPro" id="IPR040359">
    <property type="entry name" value="GDU"/>
</dbReference>
<dbReference type="PANTHER" id="PTHR33228">
    <property type="entry name" value="PROTEIN GLUTAMINE DUMPER 4-RELATED"/>
    <property type="match status" value="1"/>
</dbReference>
<dbReference type="PANTHER" id="PTHR33228:SF49">
    <property type="entry name" value="PROTEIN GLUTAMINE DUMPER 5"/>
    <property type="match status" value="1"/>
</dbReference>